<comment type="function">
    <text evidence="1">Involved in protein export. Acts as a chaperone by maintaining the newly synthesized protein in an open conformation. Functions as a peptidyl-prolyl cis-trans isomerase.</text>
</comment>
<comment type="catalytic activity">
    <reaction evidence="1">
        <text>[protein]-peptidylproline (omega=180) = [protein]-peptidylproline (omega=0)</text>
        <dbReference type="Rhea" id="RHEA:16237"/>
        <dbReference type="Rhea" id="RHEA-COMP:10747"/>
        <dbReference type="Rhea" id="RHEA-COMP:10748"/>
        <dbReference type="ChEBI" id="CHEBI:83833"/>
        <dbReference type="ChEBI" id="CHEBI:83834"/>
        <dbReference type="EC" id="5.2.1.8"/>
    </reaction>
</comment>
<comment type="subcellular location">
    <subcellularLocation>
        <location>Cytoplasm</location>
    </subcellularLocation>
    <text evidence="1">About half TF is bound to the ribosome near the polypeptide exit tunnel while the other half is free in the cytoplasm.</text>
</comment>
<comment type="domain">
    <text evidence="1">Consists of 3 domains; the N-terminus binds the ribosome, the middle domain has PPIase activity, while the C-terminus has intrinsic chaperone activity on its own.</text>
</comment>
<comment type="similarity">
    <text evidence="1">Belongs to the FKBP-type PPIase family. Tig subfamily.</text>
</comment>
<feature type="chain" id="PRO_1000115524" description="Trigger factor">
    <location>
        <begin position="1"/>
        <end position="442"/>
    </location>
</feature>
<feature type="domain" description="PPIase FKBP-type" evidence="1">
    <location>
        <begin position="165"/>
        <end position="250"/>
    </location>
</feature>
<evidence type="ECO:0000255" key="1">
    <source>
        <dbReference type="HAMAP-Rule" id="MF_00303"/>
    </source>
</evidence>
<keyword id="KW-0131">Cell cycle</keyword>
<keyword id="KW-0132">Cell division</keyword>
<keyword id="KW-0143">Chaperone</keyword>
<keyword id="KW-0963">Cytoplasm</keyword>
<keyword id="KW-0413">Isomerase</keyword>
<keyword id="KW-0697">Rotamase</keyword>
<protein>
    <recommendedName>
        <fullName evidence="1">Trigger factor</fullName>
        <shortName evidence="1">TF</shortName>
        <ecNumber evidence="1">5.2.1.8</ecNumber>
    </recommendedName>
    <alternativeName>
        <fullName evidence="1">PPIase</fullName>
    </alternativeName>
</protein>
<name>TIG_COXB1</name>
<accession>B6J8W5</accession>
<proteinExistence type="inferred from homology"/>
<organism>
    <name type="scientific">Coxiella burnetii (strain CbuK_Q154)</name>
    <name type="common">Coxiella burnetii (strain Q154)</name>
    <dbReference type="NCBI Taxonomy" id="434924"/>
    <lineage>
        <taxon>Bacteria</taxon>
        <taxon>Pseudomonadati</taxon>
        <taxon>Pseudomonadota</taxon>
        <taxon>Gammaproteobacteria</taxon>
        <taxon>Legionellales</taxon>
        <taxon>Coxiellaceae</taxon>
        <taxon>Coxiella</taxon>
    </lineage>
</organism>
<sequence>MRGNFMSSIEKLGGLKQRLTITVSAEEVDKAYKSRLLKVARTAKIPKFRPGKASPAVVEKLYGKAILQEVGSELIQSSLREAVEEHQLRVAGAPDIKMDKILRGEPFKYVVNFEVYPEITLESLAGETIERTQVEITEEDLDKMLEALRKQYAEWKEVDRPAKADDRVIIDFEGTLDGKPFERGSAKDFQLELGSKRMIAGFEEGIEGMKPGESKALDITFPADYPSEDLAGKAAVFNITLQKVMAPELPVLDEQFAERLGIKEGGLEALRQKVRTNMEKEVHHHMENKLKMAVLDKLIERNPIEVPESLIEAEIDHLQQMTRQQVAMQTHKPDEAKKMELPRDPYREQATKRVKLGLLLAEVVKQHKIKADPEQLRARVEEVAASYQDPEKVISWYYSNKQMLSEIESVVLEDQAVAQLMSELEVEDQAIPYEEAVKQIQQ</sequence>
<gene>
    <name evidence="1" type="primary">tig</name>
    <name type="ordered locus">CbuK_1518</name>
</gene>
<reference key="1">
    <citation type="journal article" date="2009" name="Infect. Immun.">
        <title>Comparative genomics reveal extensive transposon-mediated genomic plasticity and diversity among potential effector proteins within the genus Coxiella.</title>
        <authorList>
            <person name="Beare P.A."/>
            <person name="Unsworth N."/>
            <person name="Andoh M."/>
            <person name="Voth D.E."/>
            <person name="Omsland A."/>
            <person name="Gilk S.D."/>
            <person name="Williams K.P."/>
            <person name="Sobral B.W."/>
            <person name="Kupko J.J. III"/>
            <person name="Porcella S.F."/>
            <person name="Samuel J.E."/>
            <person name="Heinzen R.A."/>
        </authorList>
    </citation>
    <scope>NUCLEOTIDE SEQUENCE [LARGE SCALE GENOMIC DNA]</scope>
    <source>
        <strain>CbuK_Q154</strain>
    </source>
</reference>
<dbReference type="EC" id="5.2.1.8" evidence="1"/>
<dbReference type="EMBL" id="CP001020">
    <property type="protein sequence ID" value="ACJ20681.1"/>
    <property type="molecule type" value="Genomic_DNA"/>
</dbReference>
<dbReference type="RefSeq" id="WP_012570845.1">
    <property type="nucleotide sequence ID" value="NC_011528.1"/>
</dbReference>
<dbReference type="SMR" id="B6J8W5"/>
<dbReference type="KEGG" id="cbc:CbuK_1518"/>
<dbReference type="HOGENOM" id="CLU_033058_2_0_6"/>
<dbReference type="GO" id="GO:0005737">
    <property type="term" value="C:cytoplasm"/>
    <property type="evidence" value="ECO:0007669"/>
    <property type="project" value="UniProtKB-SubCell"/>
</dbReference>
<dbReference type="GO" id="GO:0003755">
    <property type="term" value="F:peptidyl-prolyl cis-trans isomerase activity"/>
    <property type="evidence" value="ECO:0007669"/>
    <property type="project" value="UniProtKB-UniRule"/>
</dbReference>
<dbReference type="GO" id="GO:0044183">
    <property type="term" value="F:protein folding chaperone"/>
    <property type="evidence" value="ECO:0007669"/>
    <property type="project" value="TreeGrafter"/>
</dbReference>
<dbReference type="GO" id="GO:0043022">
    <property type="term" value="F:ribosome binding"/>
    <property type="evidence" value="ECO:0007669"/>
    <property type="project" value="TreeGrafter"/>
</dbReference>
<dbReference type="GO" id="GO:0051083">
    <property type="term" value="P:'de novo' cotranslational protein folding"/>
    <property type="evidence" value="ECO:0007669"/>
    <property type="project" value="TreeGrafter"/>
</dbReference>
<dbReference type="GO" id="GO:0051301">
    <property type="term" value="P:cell division"/>
    <property type="evidence" value="ECO:0007669"/>
    <property type="project" value="UniProtKB-KW"/>
</dbReference>
<dbReference type="GO" id="GO:0061077">
    <property type="term" value="P:chaperone-mediated protein folding"/>
    <property type="evidence" value="ECO:0007669"/>
    <property type="project" value="TreeGrafter"/>
</dbReference>
<dbReference type="GO" id="GO:0015031">
    <property type="term" value="P:protein transport"/>
    <property type="evidence" value="ECO:0007669"/>
    <property type="project" value="UniProtKB-UniRule"/>
</dbReference>
<dbReference type="GO" id="GO:0043335">
    <property type="term" value="P:protein unfolding"/>
    <property type="evidence" value="ECO:0007669"/>
    <property type="project" value="TreeGrafter"/>
</dbReference>
<dbReference type="FunFam" id="3.10.50.40:FF:000001">
    <property type="entry name" value="Trigger factor"/>
    <property type="match status" value="1"/>
</dbReference>
<dbReference type="Gene3D" id="3.10.50.40">
    <property type="match status" value="1"/>
</dbReference>
<dbReference type="Gene3D" id="3.30.70.1050">
    <property type="entry name" value="Trigger factor ribosome-binding domain"/>
    <property type="match status" value="1"/>
</dbReference>
<dbReference type="Gene3D" id="1.10.3120.10">
    <property type="entry name" value="Trigger factor, C-terminal domain"/>
    <property type="match status" value="1"/>
</dbReference>
<dbReference type="HAMAP" id="MF_00303">
    <property type="entry name" value="Trigger_factor_Tig"/>
    <property type="match status" value="1"/>
</dbReference>
<dbReference type="InterPro" id="IPR046357">
    <property type="entry name" value="PPIase_dom_sf"/>
</dbReference>
<dbReference type="InterPro" id="IPR001179">
    <property type="entry name" value="PPIase_FKBP_dom"/>
</dbReference>
<dbReference type="InterPro" id="IPR005215">
    <property type="entry name" value="Trig_fac"/>
</dbReference>
<dbReference type="InterPro" id="IPR008880">
    <property type="entry name" value="Trigger_fac_C"/>
</dbReference>
<dbReference type="InterPro" id="IPR037041">
    <property type="entry name" value="Trigger_fac_C_sf"/>
</dbReference>
<dbReference type="InterPro" id="IPR008881">
    <property type="entry name" value="Trigger_fac_ribosome-bd_bac"/>
</dbReference>
<dbReference type="InterPro" id="IPR036611">
    <property type="entry name" value="Trigger_fac_ribosome-bd_sf"/>
</dbReference>
<dbReference type="InterPro" id="IPR027304">
    <property type="entry name" value="Trigger_fact/SurA_dom_sf"/>
</dbReference>
<dbReference type="NCBIfam" id="TIGR00115">
    <property type="entry name" value="tig"/>
    <property type="match status" value="1"/>
</dbReference>
<dbReference type="PANTHER" id="PTHR30560">
    <property type="entry name" value="TRIGGER FACTOR CHAPERONE AND PEPTIDYL-PROLYL CIS/TRANS ISOMERASE"/>
    <property type="match status" value="1"/>
</dbReference>
<dbReference type="PANTHER" id="PTHR30560:SF3">
    <property type="entry name" value="TRIGGER FACTOR-LIKE PROTEIN TIG, CHLOROPLASTIC"/>
    <property type="match status" value="1"/>
</dbReference>
<dbReference type="Pfam" id="PF00254">
    <property type="entry name" value="FKBP_C"/>
    <property type="match status" value="1"/>
</dbReference>
<dbReference type="Pfam" id="PF05698">
    <property type="entry name" value="Trigger_C"/>
    <property type="match status" value="1"/>
</dbReference>
<dbReference type="Pfam" id="PF05697">
    <property type="entry name" value="Trigger_N"/>
    <property type="match status" value="1"/>
</dbReference>
<dbReference type="PIRSF" id="PIRSF003095">
    <property type="entry name" value="Trigger_factor"/>
    <property type="match status" value="1"/>
</dbReference>
<dbReference type="SUPFAM" id="SSF54534">
    <property type="entry name" value="FKBP-like"/>
    <property type="match status" value="1"/>
</dbReference>
<dbReference type="SUPFAM" id="SSF109998">
    <property type="entry name" value="Triger factor/SurA peptide-binding domain-like"/>
    <property type="match status" value="1"/>
</dbReference>
<dbReference type="SUPFAM" id="SSF102735">
    <property type="entry name" value="Trigger factor ribosome-binding domain"/>
    <property type="match status" value="1"/>
</dbReference>
<dbReference type="PROSITE" id="PS50059">
    <property type="entry name" value="FKBP_PPIASE"/>
    <property type="match status" value="1"/>
</dbReference>